<sequence>MSIVEEPYLQLIRDILEKGHEKSDRTGTGTKSLFGYQMRFNLAEGFPLLTTKKVPFGLIKSELLWFLRGDTNIRFLLEHNNHIWDEWAFKNWVESDEYHGPDMTNFGLRAQEDDNFNKVYQDEKKKFCQKIVEDQEFANKFGNLGDVYGAQWRHWQTRNGETIDQIKDVIETIKNNPDSRRMIVTAWNPEDVPLSALPPCHTLFQFYVNDGKLSCQLYQRSADVFLGVPFNIASYALLTHMIARETGLEVGEFVHTLGDAHIYLNHLDQVNEQLQRKPNDAPTLWLNPEKKNIMDFEMEDIKVKNYHSHSAIKAPVAV</sequence>
<comment type="function">
    <text evidence="1">Catalyzes the reductive methylation of 2'-deoxyuridine-5'-monophosphate (dUMP) to 2'-deoxythymidine-5'-monophosphate (dTMP) while utilizing 5,10-methylenetetrahydrofolate (mTHF) as the methyl donor and reductant in the reaction, yielding dihydrofolate (DHF) as a by-product. This enzymatic reaction provides an intracellular de novo source of dTMP, an essential precursor for DNA biosynthesis.</text>
</comment>
<comment type="catalytic activity">
    <reaction evidence="1">
        <text>dUMP + (6R)-5,10-methylene-5,6,7,8-tetrahydrofolate = 7,8-dihydrofolate + dTMP</text>
        <dbReference type="Rhea" id="RHEA:12104"/>
        <dbReference type="ChEBI" id="CHEBI:15636"/>
        <dbReference type="ChEBI" id="CHEBI:57451"/>
        <dbReference type="ChEBI" id="CHEBI:63528"/>
        <dbReference type="ChEBI" id="CHEBI:246422"/>
        <dbReference type="EC" id="2.1.1.45"/>
    </reaction>
</comment>
<comment type="pathway">
    <text evidence="1">Pyrimidine metabolism; dTTP biosynthesis.</text>
</comment>
<comment type="subunit">
    <text evidence="1">Homodimer.</text>
</comment>
<comment type="subcellular location">
    <subcellularLocation>
        <location evidence="1">Cytoplasm</location>
    </subcellularLocation>
</comment>
<comment type="similarity">
    <text evidence="1">Belongs to the thymidylate synthase family. Bacterial-type ThyA subfamily.</text>
</comment>
<feature type="chain" id="PRO_1000000618" description="Thymidylate synthase">
    <location>
        <begin position="1"/>
        <end position="318"/>
    </location>
</feature>
<feature type="active site" description="Nucleophile" evidence="1">
    <location>
        <position position="200"/>
    </location>
</feature>
<feature type="binding site" description="in other chain" evidence="1">
    <location>
        <position position="25"/>
    </location>
    <ligand>
        <name>dUMP</name>
        <dbReference type="ChEBI" id="CHEBI:246422"/>
        <note>ligand shared between dimeric partners</note>
    </ligand>
</feature>
<feature type="binding site" evidence="1">
    <location>
        <begin position="180"/>
        <end position="181"/>
    </location>
    <ligand>
        <name>dUMP</name>
        <dbReference type="ChEBI" id="CHEBI:246422"/>
        <note>ligand shared between dimeric partners</note>
    </ligand>
</feature>
<feature type="binding site" description="in other chain" evidence="1">
    <location>
        <begin position="220"/>
        <end position="223"/>
    </location>
    <ligand>
        <name>dUMP</name>
        <dbReference type="ChEBI" id="CHEBI:246422"/>
        <note>ligand shared between dimeric partners</note>
    </ligand>
</feature>
<feature type="binding site" evidence="1">
    <location>
        <position position="223"/>
    </location>
    <ligand>
        <name>(6R)-5,10-methylene-5,6,7,8-tetrahydrofolate</name>
        <dbReference type="ChEBI" id="CHEBI:15636"/>
    </ligand>
</feature>
<feature type="binding site" description="in other chain" evidence="1">
    <location>
        <position position="231"/>
    </location>
    <ligand>
        <name>dUMP</name>
        <dbReference type="ChEBI" id="CHEBI:246422"/>
        <note>ligand shared between dimeric partners</note>
    </ligand>
</feature>
<feature type="binding site" description="in other chain" evidence="1">
    <location>
        <begin position="261"/>
        <end position="263"/>
    </location>
    <ligand>
        <name>dUMP</name>
        <dbReference type="ChEBI" id="CHEBI:246422"/>
        <note>ligand shared between dimeric partners</note>
    </ligand>
</feature>
<feature type="binding site" evidence="1">
    <location>
        <position position="317"/>
    </location>
    <ligand>
        <name>(6R)-5,10-methylene-5,6,7,8-tetrahydrofolate</name>
        <dbReference type="ChEBI" id="CHEBI:15636"/>
    </ligand>
</feature>
<organism>
    <name type="scientific">Ligilactobacillus salivarius (strain UCC118)</name>
    <name type="common">Lactobacillus salivarius</name>
    <dbReference type="NCBI Taxonomy" id="362948"/>
    <lineage>
        <taxon>Bacteria</taxon>
        <taxon>Bacillati</taxon>
        <taxon>Bacillota</taxon>
        <taxon>Bacilli</taxon>
        <taxon>Lactobacillales</taxon>
        <taxon>Lactobacillaceae</taxon>
        <taxon>Ligilactobacillus</taxon>
    </lineage>
</organism>
<gene>
    <name evidence="1" type="primary">thyA</name>
    <name type="ordered locus">LSL_0708</name>
</gene>
<reference key="1">
    <citation type="journal article" date="2006" name="Proc. Natl. Acad. Sci. U.S.A.">
        <title>Multireplicon genome architecture of Lactobacillus salivarius.</title>
        <authorList>
            <person name="Claesson M.J."/>
            <person name="Li Y."/>
            <person name="Leahy S."/>
            <person name="Canchaya C."/>
            <person name="van Pijkeren J.P."/>
            <person name="Cerdeno-Tarraga A.M."/>
            <person name="Parkhill J."/>
            <person name="Flynn S."/>
            <person name="O'Sullivan G.C."/>
            <person name="Collins J.K."/>
            <person name="Higgins D."/>
            <person name="Shanahan F."/>
            <person name="Fitzgerald G.F."/>
            <person name="van Sinderen D."/>
            <person name="O'Toole P.W."/>
        </authorList>
    </citation>
    <scope>NUCLEOTIDE SEQUENCE [LARGE SCALE GENOMIC DNA]</scope>
    <source>
        <strain>UCC118</strain>
    </source>
</reference>
<accession>Q1WU17</accession>
<dbReference type="EC" id="2.1.1.45" evidence="1"/>
<dbReference type="EMBL" id="CP000233">
    <property type="protein sequence ID" value="ABD99518.1"/>
    <property type="molecule type" value="Genomic_DNA"/>
</dbReference>
<dbReference type="RefSeq" id="WP_003700096.1">
    <property type="nucleotide sequence ID" value="NC_007929.1"/>
</dbReference>
<dbReference type="RefSeq" id="YP_535601.1">
    <property type="nucleotide sequence ID" value="NC_007929.1"/>
</dbReference>
<dbReference type="SMR" id="Q1WU17"/>
<dbReference type="STRING" id="362948.LSL_0708"/>
<dbReference type="KEGG" id="lsl:LSL_0708"/>
<dbReference type="PATRIC" id="fig|362948.14.peg.787"/>
<dbReference type="HOGENOM" id="CLU_021669_0_2_9"/>
<dbReference type="OrthoDB" id="9774633at2"/>
<dbReference type="UniPathway" id="UPA00575"/>
<dbReference type="Proteomes" id="UP000006559">
    <property type="component" value="Chromosome"/>
</dbReference>
<dbReference type="GO" id="GO:0005829">
    <property type="term" value="C:cytosol"/>
    <property type="evidence" value="ECO:0007669"/>
    <property type="project" value="TreeGrafter"/>
</dbReference>
<dbReference type="GO" id="GO:0004799">
    <property type="term" value="F:thymidylate synthase activity"/>
    <property type="evidence" value="ECO:0007669"/>
    <property type="project" value="UniProtKB-UniRule"/>
</dbReference>
<dbReference type="GO" id="GO:0006231">
    <property type="term" value="P:dTMP biosynthetic process"/>
    <property type="evidence" value="ECO:0007669"/>
    <property type="project" value="UniProtKB-UniRule"/>
</dbReference>
<dbReference type="GO" id="GO:0006235">
    <property type="term" value="P:dTTP biosynthetic process"/>
    <property type="evidence" value="ECO:0007669"/>
    <property type="project" value="UniProtKB-UniRule"/>
</dbReference>
<dbReference type="GO" id="GO:0032259">
    <property type="term" value="P:methylation"/>
    <property type="evidence" value="ECO:0007669"/>
    <property type="project" value="UniProtKB-KW"/>
</dbReference>
<dbReference type="CDD" id="cd00351">
    <property type="entry name" value="TS_Pyrimidine_HMase"/>
    <property type="match status" value="1"/>
</dbReference>
<dbReference type="Gene3D" id="3.30.572.10">
    <property type="entry name" value="Thymidylate synthase/dCMP hydroxymethylase domain"/>
    <property type="match status" value="1"/>
</dbReference>
<dbReference type="HAMAP" id="MF_00008">
    <property type="entry name" value="Thymidy_synth_bact"/>
    <property type="match status" value="1"/>
</dbReference>
<dbReference type="InterPro" id="IPR045097">
    <property type="entry name" value="Thymidate_synth/dCMP_Mease"/>
</dbReference>
<dbReference type="InterPro" id="IPR023451">
    <property type="entry name" value="Thymidate_synth/dCMP_Mease_dom"/>
</dbReference>
<dbReference type="InterPro" id="IPR036926">
    <property type="entry name" value="Thymidate_synth/dCMP_Mease_sf"/>
</dbReference>
<dbReference type="InterPro" id="IPR000398">
    <property type="entry name" value="Thymidylate_synthase"/>
</dbReference>
<dbReference type="InterPro" id="IPR020940">
    <property type="entry name" value="Thymidylate_synthase_AS"/>
</dbReference>
<dbReference type="NCBIfam" id="NF002496">
    <property type="entry name" value="PRK01827.1-2"/>
    <property type="match status" value="1"/>
</dbReference>
<dbReference type="NCBIfam" id="TIGR03284">
    <property type="entry name" value="thym_sym"/>
    <property type="match status" value="1"/>
</dbReference>
<dbReference type="PANTHER" id="PTHR11548:SF9">
    <property type="entry name" value="THYMIDYLATE SYNTHASE"/>
    <property type="match status" value="1"/>
</dbReference>
<dbReference type="PANTHER" id="PTHR11548">
    <property type="entry name" value="THYMIDYLATE SYNTHASE 1"/>
    <property type="match status" value="1"/>
</dbReference>
<dbReference type="Pfam" id="PF00303">
    <property type="entry name" value="Thymidylat_synt"/>
    <property type="match status" value="1"/>
</dbReference>
<dbReference type="PRINTS" id="PR00108">
    <property type="entry name" value="THYMDSNTHASE"/>
</dbReference>
<dbReference type="SUPFAM" id="SSF55831">
    <property type="entry name" value="Thymidylate synthase/dCMP hydroxymethylase"/>
    <property type="match status" value="1"/>
</dbReference>
<dbReference type="PROSITE" id="PS00091">
    <property type="entry name" value="THYMIDYLATE_SYNTHASE"/>
    <property type="match status" value="1"/>
</dbReference>
<proteinExistence type="inferred from homology"/>
<protein>
    <recommendedName>
        <fullName evidence="1">Thymidylate synthase</fullName>
        <shortName evidence="1">TS</shortName>
        <shortName evidence="1">TSase</shortName>
        <ecNumber evidence="1">2.1.1.45</ecNumber>
    </recommendedName>
</protein>
<keyword id="KW-0963">Cytoplasm</keyword>
<keyword id="KW-0489">Methyltransferase</keyword>
<keyword id="KW-0545">Nucleotide biosynthesis</keyword>
<keyword id="KW-1185">Reference proteome</keyword>
<keyword id="KW-0808">Transferase</keyword>
<name>TYSY_LIGS1</name>
<evidence type="ECO:0000255" key="1">
    <source>
        <dbReference type="HAMAP-Rule" id="MF_00008"/>
    </source>
</evidence>